<accession>Q64415</accession>
<accession>Q64416</accession>
<gene>
    <name type="primary">ADH1</name>
</gene>
<sequence length="375" mass="39943">MSTAGKVIKCRAAVLWEKNKPFSIEEVEVVPPKAYEVRIKIVATGICRSDDHVVNGSIITPLPAILGHEAGGIVESIGEGVTTVKPGDKVIPLFVPQCGKCRACKHPESNLCTHGDLGRAQGTLMDGTSRFTCKGKPIHHFLGVTTFSEYTVVSEISVTKIDAASPLEKVCLIGCGFSTGYGSAVKVGKVARGSICSCVWSGRVGLSAIIGCKAAGAARIIAVDINKDKFAKAKELGATECVNPQDYDKPIYQVLQEMTDGGVDFSFEVIGRLDTMVSALMCCQESHGVSVIVGVPPNAQSLTMDPMVLLSGRSWKGAVFGGYKGKDDVPKLVADFMAKKFPLEPLITNVFPFAKINEGFDLLRAGKSIRTVLTF</sequence>
<reference key="1">
    <citation type="journal article" date="1993" name="Proc. Natl. Acad. Sci. U.S.A.">
        <title>Origin of a novel allele in a mammalian hybrid zone.</title>
        <authorList>
            <person name="Bradley R.D."/>
            <person name="Bull J.J."/>
            <person name="Johnson A.D."/>
            <person name="Hillis D.M."/>
        </authorList>
    </citation>
    <scope>NUCLEOTIDE SEQUENCE [MRNA]</scope>
    <scope>VARIANT ALA-30</scope>
    <source>
        <strain>Isolate TK 30715</strain>
        <tissue>Liver</tissue>
    </source>
</reference>
<comment type="catalytic activity">
    <reaction>
        <text>a primary alcohol + NAD(+) = an aldehyde + NADH + H(+)</text>
        <dbReference type="Rhea" id="RHEA:10736"/>
        <dbReference type="ChEBI" id="CHEBI:15378"/>
        <dbReference type="ChEBI" id="CHEBI:15734"/>
        <dbReference type="ChEBI" id="CHEBI:17478"/>
        <dbReference type="ChEBI" id="CHEBI:57540"/>
        <dbReference type="ChEBI" id="CHEBI:57945"/>
        <dbReference type="EC" id="1.1.1.1"/>
    </reaction>
</comment>
<comment type="catalytic activity">
    <reaction>
        <text>a secondary alcohol + NAD(+) = a ketone + NADH + H(+)</text>
        <dbReference type="Rhea" id="RHEA:10740"/>
        <dbReference type="ChEBI" id="CHEBI:15378"/>
        <dbReference type="ChEBI" id="CHEBI:17087"/>
        <dbReference type="ChEBI" id="CHEBI:35681"/>
        <dbReference type="ChEBI" id="CHEBI:57540"/>
        <dbReference type="ChEBI" id="CHEBI:57945"/>
        <dbReference type="EC" id="1.1.1.1"/>
    </reaction>
</comment>
<comment type="cofactor">
    <cofactor evidence="1">
        <name>Zn(2+)</name>
        <dbReference type="ChEBI" id="CHEBI:29105"/>
    </cofactor>
    <text evidence="1">Binds 2 Zn(2+) ions per subunit.</text>
</comment>
<comment type="subunit">
    <text evidence="1">Homodimer.</text>
</comment>
<comment type="subcellular location">
    <subcellularLocation>
        <location evidence="1">Cytoplasm</location>
    </subcellularLocation>
</comment>
<comment type="similarity">
    <text evidence="5">Belongs to the zinc-containing alcohol dehydrogenase family. Class-I subfamily.</text>
</comment>
<proteinExistence type="evidence at transcript level"/>
<organism>
    <name type="scientific">Geomys knoxjonesi</name>
    <name type="common">Jones' pocket gopher</name>
    <dbReference type="NCBI Taxonomy" id="27683"/>
    <lineage>
        <taxon>Eukaryota</taxon>
        <taxon>Metazoa</taxon>
        <taxon>Chordata</taxon>
        <taxon>Craniata</taxon>
        <taxon>Vertebrata</taxon>
        <taxon>Euteleostomi</taxon>
        <taxon>Mammalia</taxon>
        <taxon>Eutheria</taxon>
        <taxon>Euarchontoglires</taxon>
        <taxon>Glires</taxon>
        <taxon>Rodentia</taxon>
        <taxon>Castorimorpha</taxon>
        <taxon>Geomyidae</taxon>
        <taxon>Geomys</taxon>
    </lineage>
</organism>
<evidence type="ECO:0000250" key="1"/>
<evidence type="ECO:0000250" key="2">
    <source>
        <dbReference type="UniProtKB" id="P00329"/>
    </source>
</evidence>
<evidence type="ECO:0000250" key="3">
    <source>
        <dbReference type="UniProtKB" id="P06757"/>
    </source>
</evidence>
<evidence type="ECO:0000269" key="4">
    <source>
    </source>
</evidence>
<evidence type="ECO:0000305" key="5"/>
<dbReference type="EC" id="1.1.1.1"/>
<dbReference type="EMBL" id="L15461">
    <property type="protein sequence ID" value="AAA03600.1"/>
    <property type="molecule type" value="mRNA"/>
</dbReference>
<dbReference type="EMBL" id="L15462">
    <property type="protein sequence ID" value="AAA03599.1"/>
    <property type="molecule type" value="mRNA"/>
</dbReference>
<dbReference type="PIR" id="I60973">
    <property type="entry name" value="I60973"/>
</dbReference>
<dbReference type="SMR" id="Q64415"/>
<dbReference type="GO" id="GO:0005829">
    <property type="term" value="C:cytosol"/>
    <property type="evidence" value="ECO:0007669"/>
    <property type="project" value="TreeGrafter"/>
</dbReference>
<dbReference type="GO" id="GO:0004745">
    <property type="term" value="F:all-trans-retinol dehydrogenase (NAD+) activity"/>
    <property type="evidence" value="ECO:0007669"/>
    <property type="project" value="TreeGrafter"/>
</dbReference>
<dbReference type="GO" id="GO:0008270">
    <property type="term" value="F:zinc ion binding"/>
    <property type="evidence" value="ECO:0007669"/>
    <property type="project" value="InterPro"/>
</dbReference>
<dbReference type="GO" id="GO:0042573">
    <property type="term" value="P:retinoic acid metabolic process"/>
    <property type="evidence" value="ECO:0007669"/>
    <property type="project" value="TreeGrafter"/>
</dbReference>
<dbReference type="GO" id="GO:0042572">
    <property type="term" value="P:retinol metabolic process"/>
    <property type="evidence" value="ECO:0007669"/>
    <property type="project" value="TreeGrafter"/>
</dbReference>
<dbReference type="CDD" id="cd08299">
    <property type="entry name" value="alcohol_DH_class_I_II_IV"/>
    <property type="match status" value="1"/>
</dbReference>
<dbReference type="FunFam" id="3.40.50.720:FF:000003">
    <property type="entry name" value="S-(hydroxymethyl)glutathione dehydrogenase"/>
    <property type="match status" value="1"/>
</dbReference>
<dbReference type="FunFam" id="3.90.180.10:FF:000001">
    <property type="entry name" value="S-(hydroxymethyl)glutathione dehydrogenase"/>
    <property type="match status" value="1"/>
</dbReference>
<dbReference type="Gene3D" id="3.90.180.10">
    <property type="entry name" value="Medium-chain alcohol dehydrogenases, catalytic domain"/>
    <property type="match status" value="1"/>
</dbReference>
<dbReference type="Gene3D" id="3.40.50.720">
    <property type="entry name" value="NAD(P)-binding Rossmann-like Domain"/>
    <property type="match status" value="1"/>
</dbReference>
<dbReference type="InterPro" id="IPR013149">
    <property type="entry name" value="ADH-like_C"/>
</dbReference>
<dbReference type="InterPro" id="IPR013154">
    <property type="entry name" value="ADH-like_N"/>
</dbReference>
<dbReference type="InterPro" id="IPR002328">
    <property type="entry name" value="ADH_Zn_CS"/>
</dbReference>
<dbReference type="InterPro" id="IPR011032">
    <property type="entry name" value="GroES-like_sf"/>
</dbReference>
<dbReference type="InterPro" id="IPR036291">
    <property type="entry name" value="NAD(P)-bd_dom_sf"/>
</dbReference>
<dbReference type="InterPro" id="IPR020843">
    <property type="entry name" value="PKS_ER"/>
</dbReference>
<dbReference type="PANTHER" id="PTHR43880">
    <property type="entry name" value="ALCOHOL DEHYDROGENASE"/>
    <property type="match status" value="1"/>
</dbReference>
<dbReference type="PANTHER" id="PTHR43880:SF1">
    <property type="entry name" value="ALCOHOL DEHYDROGENASE 1A"/>
    <property type="match status" value="1"/>
</dbReference>
<dbReference type="Pfam" id="PF08240">
    <property type="entry name" value="ADH_N"/>
    <property type="match status" value="1"/>
</dbReference>
<dbReference type="Pfam" id="PF00107">
    <property type="entry name" value="ADH_zinc_N"/>
    <property type="match status" value="1"/>
</dbReference>
<dbReference type="SMART" id="SM00829">
    <property type="entry name" value="PKS_ER"/>
    <property type="match status" value="1"/>
</dbReference>
<dbReference type="SUPFAM" id="SSF50129">
    <property type="entry name" value="GroES-like"/>
    <property type="match status" value="2"/>
</dbReference>
<dbReference type="SUPFAM" id="SSF51735">
    <property type="entry name" value="NAD(P)-binding Rossmann-fold domains"/>
    <property type="match status" value="1"/>
</dbReference>
<dbReference type="PROSITE" id="PS00059">
    <property type="entry name" value="ADH_ZINC"/>
    <property type="match status" value="1"/>
</dbReference>
<keyword id="KW-0007">Acetylation</keyword>
<keyword id="KW-0963">Cytoplasm</keyword>
<keyword id="KW-0479">Metal-binding</keyword>
<keyword id="KW-0520">NAD</keyword>
<keyword id="KW-0560">Oxidoreductase</keyword>
<keyword id="KW-0862">Zinc</keyword>
<protein>
    <recommendedName>
        <fullName>Alcohol dehydrogenase 1</fullName>
        <ecNumber>1.1.1.1</ecNumber>
    </recommendedName>
    <alternativeName>
        <fullName>Alcohol dehydrogenase A subunit</fullName>
    </alternativeName>
</protein>
<name>ADH1_GEOKN</name>
<feature type="initiator methionine" description="Removed" evidence="3">
    <location>
        <position position="1"/>
    </location>
</feature>
<feature type="chain" id="PRO_0000160655" description="Alcohol dehydrogenase 1">
    <location>
        <begin position="2"/>
        <end position="375"/>
    </location>
</feature>
<feature type="binding site" evidence="1">
    <location>
        <position position="47"/>
    </location>
    <ligand>
        <name>Zn(2+)</name>
        <dbReference type="ChEBI" id="CHEBI:29105"/>
        <label>1</label>
        <note>catalytic</note>
    </ligand>
</feature>
<feature type="binding site" evidence="1">
    <location>
        <position position="68"/>
    </location>
    <ligand>
        <name>Zn(2+)</name>
        <dbReference type="ChEBI" id="CHEBI:29105"/>
        <label>1</label>
        <note>catalytic</note>
    </ligand>
</feature>
<feature type="binding site" evidence="1">
    <location>
        <position position="98"/>
    </location>
    <ligand>
        <name>Zn(2+)</name>
        <dbReference type="ChEBI" id="CHEBI:29105"/>
        <label>2</label>
    </ligand>
</feature>
<feature type="binding site" evidence="1">
    <location>
        <position position="101"/>
    </location>
    <ligand>
        <name>Zn(2+)</name>
        <dbReference type="ChEBI" id="CHEBI:29105"/>
        <label>2</label>
    </ligand>
</feature>
<feature type="binding site" evidence="1">
    <location>
        <position position="104"/>
    </location>
    <ligand>
        <name>Zn(2+)</name>
        <dbReference type="ChEBI" id="CHEBI:29105"/>
        <label>2</label>
    </ligand>
</feature>
<feature type="binding site" evidence="1">
    <location>
        <position position="112"/>
    </location>
    <ligand>
        <name>Zn(2+)</name>
        <dbReference type="ChEBI" id="CHEBI:29105"/>
        <label>2</label>
    </ligand>
</feature>
<feature type="binding site" evidence="1">
    <location>
        <position position="175"/>
    </location>
    <ligand>
        <name>Zn(2+)</name>
        <dbReference type="ChEBI" id="CHEBI:29105"/>
        <label>1</label>
        <note>catalytic</note>
    </ligand>
</feature>
<feature type="binding site" evidence="1">
    <location>
        <begin position="200"/>
        <end position="205"/>
    </location>
    <ligand>
        <name>NAD(+)</name>
        <dbReference type="ChEBI" id="CHEBI:57540"/>
    </ligand>
</feature>
<feature type="binding site" evidence="1">
    <location>
        <position position="224"/>
    </location>
    <ligand>
        <name>NAD(+)</name>
        <dbReference type="ChEBI" id="CHEBI:57540"/>
    </ligand>
</feature>
<feature type="binding site" evidence="1">
    <location>
        <position position="229"/>
    </location>
    <ligand>
        <name>NAD(+)</name>
        <dbReference type="ChEBI" id="CHEBI:57540"/>
    </ligand>
</feature>
<feature type="binding site" evidence="1">
    <location>
        <begin position="293"/>
        <end position="295"/>
    </location>
    <ligand>
        <name>NAD(+)</name>
        <dbReference type="ChEBI" id="CHEBI:57540"/>
    </ligand>
</feature>
<feature type="binding site" evidence="1">
    <location>
        <position position="370"/>
    </location>
    <ligand>
        <name>NAD(+)</name>
        <dbReference type="ChEBI" id="CHEBI:57540"/>
    </ligand>
</feature>
<feature type="modified residue" description="N-acetylserine" evidence="3">
    <location>
        <position position="2"/>
    </location>
</feature>
<feature type="modified residue" description="N6-succinyllysine" evidence="2">
    <location>
        <position position="234"/>
    </location>
</feature>
<feature type="modified residue" description="N6-succinyllysine" evidence="2">
    <location>
        <position position="340"/>
    </location>
</feature>
<feature type="sequence variant" evidence="4">
    <original>V</original>
    <variation>A</variation>
    <location>
        <position position="30"/>
    </location>
</feature>